<accession>Q7A698</accession>
<gene>
    <name type="primary">qoxA</name>
    <name type="ordered locus">SA0913</name>
</gene>
<keyword id="KW-1003">Cell membrane</keyword>
<keyword id="KW-0249">Electron transport</keyword>
<keyword id="KW-0449">Lipoprotein</keyword>
<keyword id="KW-0472">Membrane</keyword>
<keyword id="KW-0560">Oxidoreductase</keyword>
<keyword id="KW-0564">Palmitate</keyword>
<keyword id="KW-0679">Respiratory chain</keyword>
<keyword id="KW-0732">Signal</keyword>
<keyword id="KW-0812">Transmembrane</keyword>
<keyword id="KW-1133">Transmembrane helix</keyword>
<keyword id="KW-0813">Transport</keyword>
<sequence>MSKFKSLLLLFGTLILLSGCSNIEIFNAKGPVASSQKFLILYSIVFMLVICFVVLGMFAIFIYKYSYNKNAESGKMHHNAIIETIWFVIPIIIVAALAIPTVKTLYDYEKPPKSEKDPMVVYAVSAGYKWFFAYPDEHIETVNTLTIPKDRPVVFKLQAMDTMTSFWIPQLGGQKYAMTGMTMNWTLEASQTGTFRGRNSNFNGEGFSRQTFKVNAVSQKDYDKWVKEVKGKKTLDQDTFDKQLLPSTPNKALEFNGTHMAFVDPAADPEYIFYAYKRFNFELKDPNFTSEENMFKDVSDKPLIPARKAQITNANYKRHGMKLMILGNDEPYNNEFKKDESKNAKEMKKISKDAQDQDNDDHGGGH</sequence>
<organism>
    <name type="scientific">Staphylococcus aureus (strain N315)</name>
    <dbReference type="NCBI Taxonomy" id="158879"/>
    <lineage>
        <taxon>Bacteria</taxon>
        <taxon>Bacillati</taxon>
        <taxon>Bacillota</taxon>
        <taxon>Bacilli</taxon>
        <taxon>Bacillales</taxon>
        <taxon>Staphylococcaceae</taxon>
        <taxon>Staphylococcus</taxon>
    </lineage>
</organism>
<feature type="signal peptide" evidence="3">
    <location>
        <begin position="1"/>
        <end position="19"/>
    </location>
</feature>
<feature type="chain" id="PRO_0000275877" description="Probable quinol oxidase subunit 2">
    <location>
        <begin position="20"/>
        <end position="366"/>
    </location>
</feature>
<feature type="transmembrane region" description="Helical" evidence="2">
    <location>
        <begin position="38"/>
        <end position="58"/>
    </location>
</feature>
<feature type="transmembrane region" description="Helical" evidence="2">
    <location>
        <begin position="80"/>
        <end position="100"/>
    </location>
</feature>
<feature type="region of interest" description="Disordered" evidence="4">
    <location>
        <begin position="330"/>
        <end position="366"/>
    </location>
</feature>
<feature type="compositionally biased region" description="Basic and acidic residues" evidence="4">
    <location>
        <begin position="335"/>
        <end position="366"/>
    </location>
</feature>
<feature type="lipid moiety-binding region" description="N-palmitoyl cysteine" evidence="3">
    <location>
        <position position="20"/>
    </location>
</feature>
<feature type="lipid moiety-binding region" description="S-diacylglycerol cysteine" evidence="3">
    <location>
        <position position="20"/>
    </location>
</feature>
<protein>
    <recommendedName>
        <fullName>Probable quinol oxidase subunit 2</fullName>
        <ecNumber>1.10.3.-</ecNumber>
    </recommendedName>
    <alternativeName>
        <fullName>Quinol oxidase polypeptide II</fullName>
    </alternativeName>
</protein>
<reference key="1">
    <citation type="journal article" date="2001" name="Lancet">
        <title>Whole genome sequencing of meticillin-resistant Staphylococcus aureus.</title>
        <authorList>
            <person name="Kuroda M."/>
            <person name="Ohta T."/>
            <person name="Uchiyama I."/>
            <person name="Baba T."/>
            <person name="Yuzawa H."/>
            <person name="Kobayashi I."/>
            <person name="Cui L."/>
            <person name="Oguchi A."/>
            <person name="Aoki K."/>
            <person name="Nagai Y."/>
            <person name="Lian J.-Q."/>
            <person name="Ito T."/>
            <person name="Kanamori M."/>
            <person name="Matsumaru H."/>
            <person name="Maruyama A."/>
            <person name="Murakami H."/>
            <person name="Hosoyama A."/>
            <person name="Mizutani-Ui Y."/>
            <person name="Takahashi N.K."/>
            <person name="Sawano T."/>
            <person name="Inoue R."/>
            <person name="Kaito C."/>
            <person name="Sekimizu K."/>
            <person name="Hirakawa H."/>
            <person name="Kuhara S."/>
            <person name="Goto S."/>
            <person name="Yabuzaki J."/>
            <person name="Kanehisa M."/>
            <person name="Yamashita A."/>
            <person name="Oshima K."/>
            <person name="Furuya K."/>
            <person name="Yoshino C."/>
            <person name="Shiba T."/>
            <person name="Hattori M."/>
            <person name="Ogasawara N."/>
            <person name="Hayashi H."/>
            <person name="Hiramatsu K."/>
        </authorList>
    </citation>
    <scope>NUCLEOTIDE SEQUENCE [LARGE SCALE GENOMIC DNA]</scope>
    <source>
        <strain>N315</strain>
    </source>
</reference>
<reference key="2">
    <citation type="submission" date="2007-10" db="UniProtKB">
        <title>Shotgun proteomic analysis of total and membrane protein extracts of S. aureus strain N315.</title>
        <authorList>
            <person name="Vaezzadeh A.R."/>
            <person name="Deshusses J."/>
            <person name="Lescuyer P."/>
            <person name="Hochstrasser D.F."/>
        </authorList>
    </citation>
    <scope>IDENTIFICATION BY MASS SPECTROMETRY [LARGE SCALE ANALYSIS]</scope>
    <source>
        <strain>N315</strain>
    </source>
</reference>
<comment type="function">
    <text evidence="1">Catalyzes quinol oxidation with the concomitant reduction of oxygen to water. Subunit II transfers the electrons from a quinol to the binuclear center of the catalytic subunit I (By similarity).</text>
</comment>
<comment type="catalytic activity">
    <reaction>
        <text>2 a quinol + O2 = 2 a quinone + 2 H2O</text>
        <dbReference type="Rhea" id="RHEA:55376"/>
        <dbReference type="ChEBI" id="CHEBI:15377"/>
        <dbReference type="ChEBI" id="CHEBI:15379"/>
        <dbReference type="ChEBI" id="CHEBI:24646"/>
        <dbReference type="ChEBI" id="CHEBI:132124"/>
    </reaction>
</comment>
<comment type="subcellular location">
    <subcellularLocation>
        <location evidence="3">Cell membrane</location>
        <topology evidence="1">Multi-pass membrane protein</topology>
    </subcellularLocation>
</comment>
<comment type="similarity">
    <text evidence="5">Belongs to the cytochrome c oxidase subunit 2 family.</text>
</comment>
<proteinExistence type="evidence at protein level"/>
<dbReference type="EC" id="1.10.3.-"/>
<dbReference type="EMBL" id="BA000018">
    <property type="protein sequence ID" value="BAB42158.1"/>
    <property type="molecule type" value="Genomic_DNA"/>
</dbReference>
<dbReference type="PIR" id="C89875">
    <property type="entry name" value="C89875"/>
</dbReference>
<dbReference type="RefSeq" id="WP_000032836.1">
    <property type="nucleotide sequence ID" value="NC_002745.2"/>
</dbReference>
<dbReference type="SMR" id="Q7A698"/>
<dbReference type="EnsemblBacteria" id="BAB42158">
    <property type="protein sequence ID" value="BAB42158"/>
    <property type="gene ID" value="BAB42158"/>
</dbReference>
<dbReference type="KEGG" id="sau:SA0913"/>
<dbReference type="HOGENOM" id="CLU_036876_6_0_9"/>
<dbReference type="GO" id="GO:0005886">
    <property type="term" value="C:plasma membrane"/>
    <property type="evidence" value="ECO:0007669"/>
    <property type="project" value="UniProtKB-SubCell"/>
</dbReference>
<dbReference type="GO" id="GO:0005507">
    <property type="term" value="F:copper ion binding"/>
    <property type="evidence" value="ECO:0007669"/>
    <property type="project" value="InterPro"/>
</dbReference>
<dbReference type="GO" id="GO:0009486">
    <property type="term" value="F:cytochrome bo3 ubiquinol oxidase activity"/>
    <property type="evidence" value="ECO:0007669"/>
    <property type="project" value="InterPro"/>
</dbReference>
<dbReference type="GO" id="GO:0004129">
    <property type="term" value="F:cytochrome-c oxidase activity"/>
    <property type="evidence" value="ECO:0007669"/>
    <property type="project" value="InterPro"/>
</dbReference>
<dbReference type="GO" id="GO:0016682">
    <property type="term" value="F:oxidoreductase activity, acting on diphenols and related substances as donors, oxygen as acceptor"/>
    <property type="evidence" value="ECO:0007669"/>
    <property type="project" value="InterPro"/>
</dbReference>
<dbReference type="GO" id="GO:0042773">
    <property type="term" value="P:ATP synthesis coupled electron transport"/>
    <property type="evidence" value="ECO:0007669"/>
    <property type="project" value="TreeGrafter"/>
</dbReference>
<dbReference type="CDD" id="cd04212">
    <property type="entry name" value="CuRO_UO_II"/>
    <property type="match status" value="1"/>
</dbReference>
<dbReference type="FunFam" id="2.60.40.420:FF:000014">
    <property type="entry name" value="Quinol oxidase subunit 2"/>
    <property type="match status" value="1"/>
</dbReference>
<dbReference type="Gene3D" id="1.10.287.90">
    <property type="match status" value="1"/>
</dbReference>
<dbReference type="Gene3D" id="2.60.40.420">
    <property type="entry name" value="Cupredoxins - blue copper proteins"/>
    <property type="match status" value="1"/>
</dbReference>
<dbReference type="InterPro" id="IPR045187">
    <property type="entry name" value="CcO_II"/>
</dbReference>
<dbReference type="InterPro" id="IPR002429">
    <property type="entry name" value="CcO_II-like_C"/>
</dbReference>
<dbReference type="InterPro" id="IPR008972">
    <property type="entry name" value="Cupredoxin"/>
</dbReference>
<dbReference type="InterPro" id="IPR034227">
    <property type="entry name" value="CuRO_UO_II"/>
</dbReference>
<dbReference type="InterPro" id="IPR011759">
    <property type="entry name" value="Cyt_c_oxidase_su2_TM_dom"/>
</dbReference>
<dbReference type="InterPro" id="IPR036257">
    <property type="entry name" value="Cyt_c_oxidase_su2_TM_sf"/>
</dbReference>
<dbReference type="InterPro" id="IPR006332">
    <property type="entry name" value="QoxA"/>
</dbReference>
<dbReference type="NCBIfam" id="TIGR01432">
    <property type="entry name" value="QOXA"/>
    <property type="match status" value="1"/>
</dbReference>
<dbReference type="PANTHER" id="PTHR22888:SF18">
    <property type="entry name" value="CYTOCHROME BO(3) UBIQUINOL OXIDASE SUBUNIT 2"/>
    <property type="match status" value="1"/>
</dbReference>
<dbReference type="PANTHER" id="PTHR22888">
    <property type="entry name" value="CYTOCHROME C OXIDASE, SUBUNIT II"/>
    <property type="match status" value="1"/>
</dbReference>
<dbReference type="Pfam" id="PF02790">
    <property type="entry name" value="COX2_TM"/>
    <property type="match status" value="1"/>
</dbReference>
<dbReference type="SUPFAM" id="SSF49503">
    <property type="entry name" value="Cupredoxins"/>
    <property type="match status" value="1"/>
</dbReference>
<dbReference type="SUPFAM" id="SSF81464">
    <property type="entry name" value="Cytochrome c oxidase subunit II-like, transmembrane region"/>
    <property type="match status" value="1"/>
</dbReference>
<dbReference type="PROSITE" id="PS50857">
    <property type="entry name" value="COX2_CUA"/>
    <property type="match status" value="1"/>
</dbReference>
<dbReference type="PROSITE" id="PS50999">
    <property type="entry name" value="COX2_TM"/>
    <property type="match status" value="1"/>
</dbReference>
<dbReference type="PROSITE" id="PS51257">
    <property type="entry name" value="PROKAR_LIPOPROTEIN"/>
    <property type="match status" value="1"/>
</dbReference>
<name>QOX2_STAAN</name>
<evidence type="ECO:0000250" key="1"/>
<evidence type="ECO:0000255" key="2"/>
<evidence type="ECO:0000255" key="3">
    <source>
        <dbReference type="PROSITE-ProRule" id="PRU00303"/>
    </source>
</evidence>
<evidence type="ECO:0000256" key="4">
    <source>
        <dbReference type="SAM" id="MobiDB-lite"/>
    </source>
</evidence>
<evidence type="ECO:0000305" key="5"/>